<reference key="1">
    <citation type="journal article" date="2010" name="Genome Biol.">
        <title>Structure and dynamics of the pan-genome of Streptococcus pneumoniae and closely related species.</title>
        <authorList>
            <person name="Donati C."/>
            <person name="Hiller N.L."/>
            <person name="Tettelin H."/>
            <person name="Muzzi A."/>
            <person name="Croucher N.J."/>
            <person name="Angiuoli S.V."/>
            <person name="Oggioni M."/>
            <person name="Dunning Hotopp J.C."/>
            <person name="Hu F.Z."/>
            <person name="Riley D.R."/>
            <person name="Covacci A."/>
            <person name="Mitchell T.J."/>
            <person name="Bentley S.D."/>
            <person name="Kilian M."/>
            <person name="Ehrlich G.D."/>
            <person name="Rappuoli R."/>
            <person name="Moxon E.R."/>
            <person name="Masignani V."/>
        </authorList>
    </citation>
    <scope>NUCLEOTIDE SEQUENCE [LARGE SCALE GENOMIC DNA]</scope>
    <source>
        <strain>JJA</strain>
    </source>
</reference>
<feature type="chain" id="PRO_1000147416" description="UDP-N-acetylmuramoylalanine--D-glutamate ligase">
    <location>
        <begin position="1"/>
        <end position="450"/>
    </location>
</feature>
<feature type="binding site" evidence="1">
    <location>
        <begin position="119"/>
        <end position="125"/>
    </location>
    <ligand>
        <name>ATP</name>
        <dbReference type="ChEBI" id="CHEBI:30616"/>
    </ligand>
</feature>
<protein>
    <recommendedName>
        <fullName evidence="1">UDP-N-acetylmuramoylalanine--D-glutamate ligase</fullName>
        <ecNumber evidence="1">6.3.2.9</ecNumber>
    </recommendedName>
    <alternativeName>
        <fullName evidence="1">D-glutamic acid-adding enzyme</fullName>
    </alternativeName>
    <alternativeName>
        <fullName evidence="1">UDP-N-acetylmuramoyl-L-alanyl-D-glutamate synthetase</fullName>
    </alternativeName>
</protein>
<accession>C1CD51</accession>
<organism>
    <name type="scientific">Streptococcus pneumoniae (strain JJA)</name>
    <dbReference type="NCBI Taxonomy" id="488222"/>
    <lineage>
        <taxon>Bacteria</taxon>
        <taxon>Bacillati</taxon>
        <taxon>Bacillota</taxon>
        <taxon>Bacilli</taxon>
        <taxon>Lactobacillales</taxon>
        <taxon>Streptococcaceae</taxon>
        <taxon>Streptococcus</taxon>
    </lineage>
</organism>
<proteinExistence type="inferred from homology"/>
<gene>
    <name evidence="1" type="primary">murD</name>
    <name type="ordered locus">SPJ_0638</name>
</gene>
<name>MURD_STRZJ</name>
<keyword id="KW-0067">ATP-binding</keyword>
<keyword id="KW-0131">Cell cycle</keyword>
<keyword id="KW-0132">Cell division</keyword>
<keyword id="KW-0133">Cell shape</keyword>
<keyword id="KW-0961">Cell wall biogenesis/degradation</keyword>
<keyword id="KW-0963">Cytoplasm</keyword>
<keyword id="KW-0436">Ligase</keyword>
<keyword id="KW-0547">Nucleotide-binding</keyword>
<keyword id="KW-0573">Peptidoglycan synthesis</keyword>
<evidence type="ECO:0000255" key="1">
    <source>
        <dbReference type="HAMAP-Rule" id="MF_00639"/>
    </source>
</evidence>
<dbReference type="EC" id="6.3.2.9" evidence="1"/>
<dbReference type="EMBL" id="CP000919">
    <property type="protein sequence ID" value="ACO18429.1"/>
    <property type="molecule type" value="Genomic_DNA"/>
</dbReference>
<dbReference type="RefSeq" id="WP_000863022.1">
    <property type="nucleotide sequence ID" value="NC_012466.1"/>
</dbReference>
<dbReference type="SMR" id="C1CD51"/>
<dbReference type="KEGG" id="sjj:SPJ_0638"/>
<dbReference type="HOGENOM" id="CLU_032540_0_1_9"/>
<dbReference type="UniPathway" id="UPA00219"/>
<dbReference type="Proteomes" id="UP000002206">
    <property type="component" value="Chromosome"/>
</dbReference>
<dbReference type="GO" id="GO:0005737">
    <property type="term" value="C:cytoplasm"/>
    <property type="evidence" value="ECO:0007669"/>
    <property type="project" value="UniProtKB-SubCell"/>
</dbReference>
<dbReference type="GO" id="GO:0005524">
    <property type="term" value="F:ATP binding"/>
    <property type="evidence" value="ECO:0007669"/>
    <property type="project" value="UniProtKB-UniRule"/>
</dbReference>
<dbReference type="GO" id="GO:0008764">
    <property type="term" value="F:UDP-N-acetylmuramoylalanine-D-glutamate ligase activity"/>
    <property type="evidence" value="ECO:0007669"/>
    <property type="project" value="UniProtKB-UniRule"/>
</dbReference>
<dbReference type="GO" id="GO:0051301">
    <property type="term" value="P:cell division"/>
    <property type="evidence" value="ECO:0007669"/>
    <property type="project" value="UniProtKB-KW"/>
</dbReference>
<dbReference type="GO" id="GO:0071555">
    <property type="term" value="P:cell wall organization"/>
    <property type="evidence" value="ECO:0007669"/>
    <property type="project" value="UniProtKB-KW"/>
</dbReference>
<dbReference type="GO" id="GO:0009252">
    <property type="term" value="P:peptidoglycan biosynthetic process"/>
    <property type="evidence" value="ECO:0007669"/>
    <property type="project" value="UniProtKB-UniRule"/>
</dbReference>
<dbReference type="GO" id="GO:0008360">
    <property type="term" value="P:regulation of cell shape"/>
    <property type="evidence" value="ECO:0007669"/>
    <property type="project" value="UniProtKB-KW"/>
</dbReference>
<dbReference type="Gene3D" id="3.90.190.20">
    <property type="entry name" value="Mur ligase, C-terminal domain"/>
    <property type="match status" value="1"/>
</dbReference>
<dbReference type="Gene3D" id="3.40.1190.10">
    <property type="entry name" value="Mur-like, catalytic domain"/>
    <property type="match status" value="1"/>
</dbReference>
<dbReference type="Gene3D" id="3.40.50.720">
    <property type="entry name" value="NAD(P)-binding Rossmann-like Domain"/>
    <property type="match status" value="1"/>
</dbReference>
<dbReference type="HAMAP" id="MF_00639">
    <property type="entry name" value="MurD"/>
    <property type="match status" value="1"/>
</dbReference>
<dbReference type="InterPro" id="IPR036565">
    <property type="entry name" value="Mur-like_cat_sf"/>
</dbReference>
<dbReference type="InterPro" id="IPR004101">
    <property type="entry name" value="Mur_ligase_C"/>
</dbReference>
<dbReference type="InterPro" id="IPR036615">
    <property type="entry name" value="Mur_ligase_C_dom_sf"/>
</dbReference>
<dbReference type="InterPro" id="IPR013221">
    <property type="entry name" value="Mur_ligase_cen"/>
</dbReference>
<dbReference type="InterPro" id="IPR005762">
    <property type="entry name" value="MurD"/>
</dbReference>
<dbReference type="NCBIfam" id="TIGR01087">
    <property type="entry name" value="murD"/>
    <property type="match status" value="1"/>
</dbReference>
<dbReference type="PANTHER" id="PTHR43692">
    <property type="entry name" value="UDP-N-ACETYLMURAMOYLALANINE--D-GLUTAMATE LIGASE"/>
    <property type="match status" value="1"/>
</dbReference>
<dbReference type="PANTHER" id="PTHR43692:SF1">
    <property type="entry name" value="UDP-N-ACETYLMURAMOYLALANINE--D-GLUTAMATE LIGASE"/>
    <property type="match status" value="1"/>
</dbReference>
<dbReference type="Pfam" id="PF02875">
    <property type="entry name" value="Mur_ligase_C"/>
    <property type="match status" value="1"/>
</dbReference>
<dbReference type="Pfam" id="PF08245">
    <property type="entry name" value="Mur_ligase_M"/>
    <property type="match status" value="1"/>
</dbReference>
<dbReference type="Pfam" id="PF21799">
    <property type="entry name" value="MurD-like_N"/>
    <property type="match status" value="1"/>
</dbReference>
<dbReference type="SUPFAM" id="SSF51984">
    <property type="entry name" value="MurCD N-terminal domain"/>
    <property type="match status" value="1"/>
</dbReference>
<dbReference type="SUPFAM" id="SSF53623">
    <property type="entry name" value="MurD-like peptide ligases, catalytic domain"/>
    <property type="match status" value="1"/>
</dbReference>
<dbReference type="SUPFAM" id="SSF53244">
    <property type="entry name" value="MurD-like peptide ligases, peptide-binding domain"/>
    <property type="match status" value="1"/>
</dbReference>
<comment type="function">
    <text evidence="1">Cell wall formation. Catalyzes the addition of glutamate to the nucleotide precursor UDP-N-acetylmuramoyl-L-alanine (UMA).</text>
</comment>
<comment type="catalytic activity">
    <reaction evidence="1">
        <text>UDP-N-acetyl-alpha-D-muramoyl-L-alanine + D-glutamate + ATP = UDP-N-acetyl-alpha-D-muramoyl-L-alanyl-D-glutamate + ADP + phosphate + H(+)</text>
        <dbReference type="Rhea" id="RHEA:16429"/>
        <dbReference type="ChEBI" id="CHEBI:15378"/>
        <dbReference type="ChEBI" id="CHEBI:29986"/>
        <dbReference type="ChEBI" id="CHEBI:30616"/>
        <dbReference type="ChEBI" id="CHEBI:43474"/>
        <dbReference type="ChEBI" id="CHEBI:83898"/>
        <dbReference type="ChEBI" id="CHEBI:83900"/>
        <dbReference type="ChEBI" id="CHEBI:456216"/>
        <dbReference type="EC" id="6.3.2.9"/>
    </reaction>
</comment>
<comment type="pathway">
    <text evidence="1">Cell wall biogenesis; peptidoglycan biosynthesis.</text>
</comment>
<comment type="subcellular location">
    <subcellularLocation>
        <location evidence="1">Cytoplasm</location>
    </subcellularLocation>
</comment>
<comment type="similarity">
    <text evidence="1">Belongs to the MurCDEF family.</text>
</comment>
<sequence length="450" mass="48536">MKVIDQFKNKKVLVLGLAKSGESAARLLDKLGAIVTVNDGKPFEDNPAAQCLLEEGIKVITGGHPLELLDEEFALMVKNPGIPYSNPMIEKALAKGIPVLTEVELAYLISEAPIIGITGSNGKTTTTTMIGEVLTAAGQHGLLSGNIGYPASQVAQIASDKDTLVMELSSFQLMGVQEFHPEIAVITNLMPTHIDYHGLFEEYVAAKWNIQNKMTAADFLVLNFNQDLVKDLASKTEATVVPFSTLEKVDGAYLEDGQLYFRGEVVMAANEIGVPGSHNVENALATIAVAKLRDVDNQTIKETLSAFGGVKHRLQFVDDIKGVKFYNDSKSTNILATQKALSGFDNSKVVLIAGGLDRGNEFDELVPDITGLKKMVILGQSAERVKRAADKAGVAYVEATDIADATRKAYELATQGDVVLLSPANASWDMYANFEVRGDLFIDTVAELKE</sequence>